<dbReference type="EMBL" id="AE006468">
    <property type="protein sequence ID" value="AAL21094.1"/>
    <property type="molecule type" value="Genomic_DNA"/>
</dbReference>
<dbReference type="PIR" id="S29390">
    <property type="entry name" value="S29390"/>
</dbReference>
<dbReference type="RefSeq" id="NP_461135.1">
    <property type="nucleotide sequence ID" value="NC_003197.2"/>
</dbReference>
<dbReference type="RefSeq" id="WP_001036943.1">
    <property type="nucleotide sequence ID" value="NC_003197.2"/>
</dbReference>
<dbReference type="PDB" id="1GCA">
    <property type="method" value="X-ray"/>
    <property type="resolution" value="1.70 A"/>
    <property type="chains" value="A=24-332"/>
</dbReference>
<dbReference type="PDB" id="1GCG">
    <property type="method" value="X-ray"/>
    <property type="resolution" value="1.90 A"/>
    <property type="chains" value="A=24-332"/>
</dbReference>
<dbReference type="PDB" id="3GA5">
    <property type="method" value="X-ray"/>
    <property type="resolution" value="1.87 A"/>
    <property type="chains" value="A/B=24-332"/>
</dbReference>
<dbReference type="PDB" id="3GBP">
    <property type="method" value="X-ray"/>
    <property type="resolution" value="2.40 A"/>
    <property type="chains" value="A=24-330"/>
</dbReference>
<dbReference type="PDBsum" id="1GCA"/>
<dbReference type="PDBsum" id="1GCG"/>
<dbReference type="PDBsum" id="3GA5"/>
<dbReference type="PDBsum" id="3GBP"/>
<dbReference type="SMR" id="P23905"/>
<dbReference type="STRING" id="99287.STM2190"/>
<dbReference type="DrugBank" id="DB02379">
    <property type="generic name" value="Beta-D-Glucose"/>
</dbReference>
<dbReference type="PaxDb" id="99287-STM2190"/>
<dbReference type="GeneID" id="1253712"/>
<dbReference type="KEGG" id="stm:STM2190"/>
<dbReference type="PATRIC" id="fig|99287.12.peg.2317"/>
<dbReference type="HOGENOM" id="CLU_037628_3_1_6"/>
<dbReference type="OMA" id="MWDAAMA"/>
<dbReference type="PhylomeDB" id="P23905"/>
<dbReference type="BioCyc" id="SENT99287:STM2190-MONOMER"/>
<dbReference type="EvolutionaryTrace" id="P23905"/>
<dbReference type="Proteomes" id="UP000001014">
    <property type="component" value="Chromosome"/>
</dbReference>
<dbReference type="GO" id="GO:0030288">
    <property type="term" value="C:outer membrane-bounded periplasmic space"/>
    <property type="evidence" value="ECO:0000318"/>
    <property type="project" value="GO_Central"/>
</dbReference>
<dbReference type="GO" id="GO:0030246">
    <property type="term" value="F:carbohydrate binding"/>
    <property type="evidence" value="ECO:0000318"/>
    <property type="project" value="GO_Central"/>
</dbReference>
<dbReference type="GO" id="GO:0046872">
    <property type="term" value="F:metal ion binding"/>
    <property type="evidence" value="ECO:0007669"/>
    <property type="project" value="UniProtKB-KW"/>
</dbReference>
<dbReference type="GO" id="GO:0006935">
    <property type="term" value="P:chemotaxis"/>
    <property type="evidence" value="ECO:0007669"/>
    <property type="project" value="UniProtKB-KW"/>
</dbReference>
<dbReference type="CDD" id="cd01539">
    <property type="entry name" value="PBP1_GGBP"/>
    <property type="match status" value="1"/>
</dbReference>
<dbReference type="FunFam" id="3.40.50.2300:FF:000038">
    <property type="entry name" value="Galactose ABC transporter substrate-binding protein"/>
    <property type="match status" value="1"/>
</dbReference>
<dbReference type="Gene3D" id="3.40.50.2300">
    <property type="match status" value="2"/>
</dbReference>
<dbReference type="InterPro" id="IPR050555">
    <property type="entry name" value="Bact_Solute-Bind_Prot2"/>
</dbReference>
<dbReference type="InterPro" id="IPR044085">
    <property type="entry name" value="MglB-like_PBP1"/>
</dbReference>
<dbReference type="InterPro" id="IPR028082">
    <property type="entry name" value="Peripla_BP_I"/>
</dbReference>
<dbReference type="InterPro" id="IPR025997">
    <property type="entry name" value="SBP_2_dom"/>
</dbReference>
<dbReference type="NCBIfam" id="NF011924">
    <property type="entry name" value="PRK15395.1"/>
    <property type="match status" value="1"/>
</dbReference>
<dbReference type="PANTHER" id="PTHR30036:SF2">
    <property type="entry name" value="D-GALACTOSE_METHYL-GALACTOSIDE BINDING PERIPLASMIC PROTEIN MGLB"/>
    <property type="match status" value="1"/>
</dbReference>
<dbReference type="PANTHER" id="PTHR30036">
    <property type="entry name" value="D-XYLOSE-BINDING PERIPLASMIC PROTEIN"/>
    <property type="match status" value="1"/>
</dbReference>
<dbReference type="Pfam" id="PF13407">
    <property type="entry name" value="Peripla_BP_4"/>
    <property type="match status" value="1"/>
</dbReference>
<dbReference type="SUPFAM" id="SSF53822">
    <property type="entry name" value="Periplasmic binding protein-like I"/>
    <property type="match status" value="1"/>
</dbReference>
<accession>P23905</accession>
<keyword id="KW-0002">3D-structure</keyword>
<keyword id="KW-0106">Calcium</keyword>
<keyword id="KW-0145">Chemotaxis</keyword>
<keyword id="KW-0479">Metal-binding</keyword>
<keyword id="KW-0574">Periplasm</keyword>
<keyword id="KW-1185">Reference proteome</keyword>
<keyword id="KW-0732">Signal</keyword>
<keyword id="KW-0762">Sugar transport</keyword>
<keyword id="KW-0813">Transport</keyword>
<name>MGLB_SALTY</name>
<gene>
    <name type="primary">mglB</name>
    <name type="ordered locus">STM2190</name>
</gene>
<organism>
    <name type="scientific">Salmonella typhimurium (strain LT2 / SGSC1412 / ATCC 700720)</name>
    <dbReference type="NCBI Taxonomy" id="99287"/>
    <lineage>
        <taxon>Bacteria</taxon>
        <taxon>Pseudomonadati</taxon>
        <taxon>Pseudomonadota</taxon>
        <taxon>Gammaproteobacteria</taxon>
        <taxon>Enterobacterales</taxon>
        <taxon>Enterobacteriaceae</taxon>
        <taxon>Salmonella</taxon>
    </lineage>
</organism>
<feature type="signal peptide">
    <location>
        <begin position="1"/>
        <end position="23"/>
    </location>
</feature>
<feature type="chain" id="PRO_0000031723" description="D-galactose/methyl-galactoside binding periplasmic protein MglB">
    <location>
        <begin position="24"/>
        <end position="332"/>
    </location>
</feature>
<feature type="binding site" evidence="3 7">
    <location>
        <position position="37"/>
    </location>
    <ligand>
        <name>beta-D-galactose</name>
        <dbReference type="ChEBI" id="CHEBI:27667"/>
    </ligand>
</feature>
<feature type="binding site" evidence="1">
    <location>
        <position position="37"/>
    </location>
    <ligand>
        <name>beta-D-glucose</name>
        <dbReference type="ChEBI" id="CHEBI:15903"/>
    </ligand>
</feature>
<feature type="binding site" evidence="3 7">
    <location>
        <position position="114"/>
    </location>
    <ligand>
        <name>beta-D-galactose</name>
        <dbReference type="ChEBI" id="CHEBI:27667"/>
    </ligand>
</feature>
<feature type="binding site" evidence="1">
    <location>
        <position position="114"/>
    </location>
    <ligand>
        <name>beta-D-glucose</name>
        <dbReference type="ChEBI" id="CHEBI:15903"/>
    </ligand>
</feature>
<feature type="binding site" evidence="2 3 7 8">
    <location>
        <position position="157"/>
    </location>
    <ligand>
        <name>Ca(2+)</name>
        <dbReference type="ChEBI" id="CHEBI:29108"/>
    </ligand>
</feature>
<feature type="binding site" evidence="2 3 7 8">
    <location>
        <position position="159"/>
    </location>
    <ligand>
        <name>Ca(2+)</name>
        <dbReference type="ChEBI" id="CHEBI:29108"/>
    </ligand>
</feature>
<feature type="binding site" evidence="2 3 7 8">
    <location>
        <position position="161"/>
    </location>
    <ligand>
        <name>Ca(2+)</name>
        <dbReference type="ChEBI" id="CHEBI:29108"/>
    </ligand>
</feature>
<feature type="binding site" evidence="2 3 7 8">
    <location>
        <position position="163"/>
    </location>
    <ligand>
        <name>Ca(2+)</name>
        <dbReference type="ChEBI" id="CHEBI:29108"/>
    </ligand>
</feature>
<feature type="binding site" evidence="2 3 7 8">
    <location>
        <position position="165"/>
    </location>
    <ligand>
        <name>Ca(2+)</name>
        <dbReference type="ChEBI" id="CHEBI:29108"/>
    </ligand>
</feature>
<feature type="binding site" evidence="3 7">
    <location>
        <position position="175"/>
    </location>
    <ligand>
        <name>beta-D-galactose</name>
        <dbReference type="ChEBI" id="CHEBI:27667"/>
    </ligand>
</feature>
<feature type="binding site" evidence="1">
    <location>
        <position position="175"/>
    </location>
    <ligand>
        <name>beta-D-glucose</name>
        <dbReference type="ChEBI" id="CHEBI:15903"/>
    </ligand>
</feature>
<feature type="binding site" evidence="3 7">
    <location>
        <position position="177"/>
    </location>
    <ligand>
        <name>beta-D-galactose</name>
        <dbReference type="ChEBI" id="CHEBI:27667"/>
    </ligand>
</feature>
<feature type="binding site" evidence="1">
    <location>
        <position position="177"/>
    </location>
    <ligand>
        <name>beta-D-glucose</name>
        <dbReference type="ChEBI" id="CHEBI:15903"/>
    </ligand>
</feature>
<feature type="binding site" evidence="3 7">
    <location>
        <position position="181"/>
    </location>
    <ligand>
        <name>beta-D-galactose</name>
        <dbReference type="ChEBI" id="CHEBI:27667"/>
    </ligand>
</feature>
<feature type="binding site" evidence="1">
    <location>
        <position position="181"/>
    </location>
    <ligand>
        <name>beta-D-glucose</name>
        <dbReference type="ChEBI" id="CHEBI:15903"/>
    </ligand>
</feature>
<feature type="binding site" evidence="2 3 7 8">
    <location>
        <position position="228"/>
    </location>
    <ligand>
        <name>Ca(2+)</name>
        <dbReference type="ChEBI" id="CHEBI:29108"/>
    </ligand>
</feature>
<feature type="binding site" evidence="3 7">
    <location>
        <position position="234"/>
    </location>
    <ligand>
        <name>beta-D-galactose</name>
        <dbReference type="ChEBI" id="CHEBI:27667"/>
    </ligand>
</feature>
<feature type="binding site" evidence="1">
    <location>
        <position position="234"/>
    </location>
    <ligand>
        <name>beta-D-glucose</name>
        <dbReference type="ChEBI" id="CHEBI:15903"/>
    </ligand>
</feature>
<feature type="binding site" evidence="3 7">
    <location>
        <position position="259"/>
    </location>
    <ligand>
        <name>beta-D-galactose</name>
        <dbReference type="ChEBI" id="CHEBI:27667"/>
    </ligand>
</feature>
<feature type="binding site" evidence="1">
    <location>
        <position position="259"/>
    </location>
    <ligand>
        <name>beta-D-glucose</name>
        <dbReference type="ChEBI" id="CHEBI:15903"/>
    </ligand>
</feature>
<feature type="binding site" evidence="3 7">
    <location>
        <position position="279"/>
    </location>
    <ligand>
        <name>beta-D-galactose</name>
        <dbReference type="ChEBI" id="CHEBI:27667"/>
    </ligand>
</feature>
<feature type="binding site" evidence="1">
    <location>
        <position position="279"/>
    </location>
    <ligand>
        <name>beta-D-glucose</name>
        <dbReference type="ChEBI" id="CHEBI:15903"/>
    </ligand>
</feature>
<feature type="site" description="Interacts with membrane-bound trg signal transducer">
    <location>
        <position position="97"/>
    </location>
</feature>
<feature type="sequence conflict" description="In Ref. 1." evidence="4" ref="1">
    <original>H</original>
    <variation>A</variation>
    <location>
        <position position="175"/>
    </location>
</feature>
<feature type="strand" evidence="9">
    <location>
        <begin position="26"/>
        <end position="33"/>
    </location>
</feature>
<feature type="helix" evidence="9">
    <location>
        <begin position="38"/>
        <end position="52"/>
    </location>
</feature>
<feature type="strand" evidence="9">
    <location>
        <begin position="57"/>
        <end position="63"/>
    </location>
</feature>
<feature type="helix" evidence="9">
    <location>
        <begin position="68"/>
        <end position="80"/>
    </location>
</feature>
<feature type="strand" evidence="9">
    <location>
        <begin position="84"/>
        <end position="88"/>
    </location>
</feature>
<feature type="helix" evidence="9">
    <location>
        <begin position="93"/>
        <end position="95"/>
    </location>
</feature>
<feature type="helix" evidence="9">
    <location>
        <begin position="96"/>
        <end position="105"/>
    </location>
</feature>
<feature type="strand" evidence="9">
    <location>
        <begin position="110"/>
        <end position="115"/>
    </location>
</feature>
<feature type="helix" evidence="9">
    <location>
        <begin position="119"/>
        <end position="123"/>
    </location>
</feature>
<feature type="strand" evidence="9">
    <location>
        <begin position="128"/>
        <end position="132"/>
    </location>
</feature>
<feature type="helix" evidence="9">
    <location>
        <begin position="135"/>
        <end position="152"/>
    </location>
</feature>
<feature type="helix" evidence="9">
    <location>
        <begin position="154"/>
        <end position="156"/>
    </location>
</feature>
<feature type="strand" evidence="9">
    <location>
        <begin position="161"/>
        <end position="170"/>
    </location>
</feature>
<feature type="helix" evidence="9">
    <location>
        <begin position="176"/>
        <end position="191"/>
    </location>
</feature>
<feature type="strand" evidence="9">
    <location>
        <begin position="196"/>
        <end position="203"/>
    </location>
</feature>
<feature type="helix" evidence="9">
    <location>
        <begin position="208"/>
        <end position="219"/>
    </location>
</feature>
<feature type="helix" evidence="9">
    <location>
        <begin position="224"/>
        <end position="226"/>
    </location>
</feature>
<feature type="strand" evidence="9">
    <location>
        <begin position="229"/>
        <end position="234"/>
    </location>
</feature>
<feature type="helix" evidence="9">
    <location>
        <begin position="235"/>
        <end position="247"/>
    </location>
</feature>
<feature type="helix" evidence="9">
    <location>
        <begin position="262"/>
        <end position="269"/>
    </location>
</feature>
<feature type="strand" evidence="9">
    <location>
        <begin position="275"/>
        <end position="278"/>
    </location>
</feature>
<feature type="helix" evidence="9">
    <location>
        <begin position="281"/>
        <end position="296"/>
    </location>
</feature>
<feature type="turn" evidence="9">
    <location>
        <begin position="301"/>
        <end position="304"/>
    </location>
</feature>
<feature type="strand" evidence="9">
    <location>
        <begin position="313"/>
        <end position="315"/>
    </location>
</feature>
<feature type="strand" evidence="9">
    <location>
        <begin position="319"/>
        <end position="321"/>
    </location>
</feature>
<feature type="turn" evidence="9">
    <location>
        <begin position="323"/>
        <end position="325"/>
    </location>
</feature>
<feature type="helix" evidence="9">
    <location>
        <begin position="326"/>
        <end position="328"/>
    </location>
</feature>
<sequence length="332" mass="35814">MNKKVLTLSAVMASLLFGAHAHAADTRIGVTIYKYDDNFMSVVRKAIEKDGKSAPDVQLLMNDSQNDQSKQNDQIDVLLAKGVKALAINLVDPAAAGTVIEKARGQNVPVVFFNKEPSRKALDSYDKAYYVGTDSKESGVIQGDLIAKHWQANQGWDLNKDGKIQYVLLKGEPGHPDAEARTTYVVKELNDKGIQTEQLALDTAMWDTAQAKDKMDAWLSGPNANKIEVVIANNDAMAMGAVEALKAHNKSSIPVFGVDALPEALALVKSGAMAGTVLNDANNQAKATFDLAKNLAEGKGAADGTSWKIENKIVRVPYVGVDKDNLSEFTQK</sequence>
<protein>
    <recommendedName>
        <fullName evidence="4">D-galactose/methyl-galactoside binding periplasmic protein MglB</fullName>
    </recommendedName>
    <alternativeName>
        <fullName>D-galactose-binding periplasmic protein</fullName>
        <shortName>GBP</shortName>
    </alternativeName>
    <alternativeName>
        <fullName>D-galactose/D-glucose-binding protein</fullName>
        <shortName>GGBP</shortName>
    </alternativeName>
</protein>
<reference key="1">
    <citation type="journal article" date="1988" name="Mol. Gen. Genet.">
        <title>The mglB sequence of Salmonella typhimurium LT2; promoter analysis by gene fusions and evidence for a divergently oriented gene coding for the mgl repressor.</title>
        <authorList>
            <person name="Benner-Luger D."/>
            <person name="Boos W."/>
        </authorList>
    </citation>
    <scope>NUCLEOTIDE SEQUENCE [GENOMIC DNA]</scope>
    <source>
        <strain>LT2</strain>
    </source>
</reference>
<reference key="2">
    <citation type="journal article" date="2001" name="Nature">
        <title>Complete genome sequence of Salmonella enterica serovar Typhimurium LT2.</title>
        <authorList>
            <person name="McClelland M."/>
            <person name="Sanderson K.E."/>
            <person name="Spieth J."/>
            <person name="Clifton S.W."/>
            <person name="Latreille P."/>
            <person name="Courtney L."/>
            <person name="Porwollik S."/>
            <person name="Ali J."/>
            <person name="Dante M."/>
            <person name="Du F."/>
            <person name="Hou S."/>
            <person name="Layman D."/>
            <person name="Leonard S."/>
            <person name="Nguyen C."/>
            <person name="Scott K."/>
            <person name="Holmes A."/>
            <person name="Grewal N."/>
            <person name="Mulvaney E."/>
            <person name="Ryan E."/>
            <person name="Sun H."/>
            <person name="Florea L."/>
            <person name="Miller W."/>
            <person name="Stoneking T."/>
            <person name="Nhan M."/>
            <person name="Waterston R."/>
            <person name="Wilson R.K."/>
        </authorList>
    </citation>
    <scope>NUCLEOTIDE SEQUENCE [LARGE SCALE GENOMIC DNA]</scope>
    <source>
        <strain>LT2 / SGSC1412 / ATCC 700720</strain>
    </source>
</reference>
<reference key="3">
    <citation type="journal article" date="1983" name="J. Biol. Chem.">
        <title>The X-ray structure of the periplasmic galactose binding protein from Salmonella typhimurium at 3.0-A resolution.</title>
        <authorList>
            <person name="Mowbray S.L."/>
            <person name="Petsko G.A."/>
        </authorList>
    </citation>
    <scope>X-RAY CRYSTALLOGRAPHY (1.8 ANGSTROMS)</scope>
</reference>
<reference evidence="7" key="4">
    <citation type="journal article" date="1993" name="J. Mol. Biol.">
        <title>The 1.7 A refined X-ray structure of the periplasmic glucose/galactose receptor from Salmonella typhimurium.</title>
        <authorList>
            <person name="Zhou J.Y."/>
            <person name="Flocco M.M."/>
            <person name="Mowbray S.L."/>
        </authorList>
    </citation>
    <scope>X-RAY CRYSTALLOGRAPHY (1.7 ANGSTROMS) OF 24-332 IN COMPLEX WITH CALCIUM AND BETA-D-GALACTOSE</scope>
</reference>
<reference evidence="8" key="5">
    <citation type="journal article" date="1994" name="J. Biol. Chem.">
        <title>The 1.9 A X-ray structure of a closed unliganded form of the periplasmic glucose/galactose receptor from Salmonella typhimurium.</title>
        <authorList>
            <person name="Flocco M.M."/>
            <person name="Mowbray S.L."/>
        </authorList>
    </citation>
    <scope>X-RAY CRYSTALLOGRAPHY (1.9 ANGSTROMS) OF 24-332 IN COMPLEX WITH CALCIUM</scope>
</reference>
<proteinExistence type="evidence at protein level"/>
<comment type="function">
    <text evidence="1 5 6">Part of the ABC transporter complex MglABC involved in galactose/methyl galactoside import (By similarity). In addition, binds D-galactose and D-glucose and plays a role in the chemotaxis towards these two sugars by interacting with the Trg chemoreceptor (Probable).</text>
</comment>
<comment type="subunit">
    <text evidence="1">The ABC transporter complex is composed of one ATP-binding protein (MglA), two transmembrane proteins (MglC) and a solute-binding protein (MglB).</text>
</comment>
<comment type="subcellular location">
    <subcellularLocation>
        <location>Periplasm</location>
    </subcellularLocation>
</comment>
<comment type="domain">
    <text>The calcium-binding site is structurally similar to that of EF-hand proteins, but is in two parts, with the last calcium ligand provided by Glu-228.</text>
</comment>
<comment type="similarity">
    <text evidence="4">Belongs to the bacterial solute-binding protein 2 family.</text>
</comment>
<evidence type="ECO:0000250" key="1">
    <source>
        <dbReference type="UniProtKB" id="P0AEE5"/>
    </source>
</evidence>
<evidence type="ECO:0000269" key="2">
    <source>
    </source>
</evidence>
<evidence type="ECO:0000269" key="3">
    <source>
    </source>
</evidence>
<evidence type="ECO:0000305" key="4"/>
<evidence type="ECO:0000305" key="5">
    <source>
    </source>
</evidence>
<evidence type="ECO:0000305" key="6">
    <source>
    </source>
</evidence>
<evidence type="ECO:0007744" key="7">
    <source>
        <dbReference type="PDB" id="1GCA"/>
    </source>
</evidence>
<evidence type="ECO:0007744" key="8">
    <source>
        <dbReference type="PDB" id="1GCG"/>
    </source>
</evidence>
<evidence type="ECO:0007829" key="9">
    <source>
        <dbReference type="PDB" id="1GCA"/>
    </source>
</evidence>